<sequence>MASDLEQLCSHINEKIGNIKRTLSLRNCGQEPTLKTILNKIGDEIIVVNELLNKLELEIQYQEQTNSSLKELFESLEEDYKDVEHLKENIPPHLPQVTVTQNFVNGSDLDPEEPVKVEEPAPTKKPPKEQRSIKEMPFITSDEFNGIPAYMKSRLTYCHINDVIKEINKAVVSKYKILHQPKKSMSSVARNLYHRFIDEETKETKGHYFVVEADIKEFTTLKVDKRFHGILNILRHCRRLSEVRGKGLTRYVIT</sequence>
<accession>Q0V7M7</accession>
<accession>G3X7D1</accession>
<name>SKA1_BOVIN</name>
<proteinExistence type="evidence at transcript level"/>
<reference key="1">
    <citation type="journal article" date="2005" name="BMC Genomics">
        <title>Characterization of 954 bovine full-CDS cDNA sequences.</title>
        <authorList>
            <person name="Harhay G.P."/>
            <person name="Sonstegard T.S."/>
            <person name="Keele J.W."/>
            <person name="Heaton M.P."/>
            <person name="Clawson M.L."/>
            <person name="Snelling W.M."/>
            <person name="Wiedmann R.T."/>
            <person name="Van Tassell C.P."/>
            <person name="Smith T.P.L."/>
        </authorList>
    </citation>
    <scope>NUCLEOTIDE SEQUENCE [LARGE SCALE MRNA] (ISOFORM 2)</scope>
</reference>
<reference key="2">
    <citation type="submission" date="2006-12" db="EMBL/GenBank/DDBJ databases">
        <authorList>
            <consortium name="NIH - Mammalian Gene Collection (MGC) project"/>
        </authorList>
    </citation>
    <scope>NUCLEOTIDE SEQUENCE [LARGE SCALE MRNA] OF 77-254 (ISOFORM 1)</scope>
    <source>
        <tissue>Thymus</tissue>
    </source>
</reference>
<reference evidence="7" key="3">
    <citation type="submission" date="2018-03" db="EMBL/GenBank/DDBJ databases">
        <title>ARS-UCD1.2.</title>
        <authorList>
            <person name="Rosen B.D."/>
            <person name="Bickhart D.M."/>
            <person name="Koren S."/>
            <person name="Schnabel R.D."/>
            <person name="Hall R."/>
            <person name="Zimin A."/>
            <person name="Dreischer C."/>
            <person name="Schultheiss S."/>
            <person name="Schroeder S.G."/>
            <person name="Elsik C.G."/>
            <person name="Couldrey C."/>
            <person name="Liu G.E."/>
            <person name="Van Tassell C.P."/>
            <person name="Phillippy A.M."/>
            <person name="Smith T.P.L."/>
            <person name="Medrano J.F."/>
        </authorList>
    </citation>
    <scope>NUCLEOTIDE SEQUENCE [LARGE SCALE GENOMIC DNA]</scope>
    <source>
        <strain evidence="7">Hereford</strain>
    </source>
</reference>
<feature type="chain" id="PRO_0000373886" description="SKA complex subunit 1">
    <location>
        <begin position="1"/>
        <end position="254"/>
    </location>
</feature>
<feature type="region of interest" description="Flexiple loop that anchors MAPRE1" evidence="1">
    <location>
        <begin position="91"/>
        <end position="131"/>
    </location>
</feature>
<feature type="region of interest" description="Disordered" evidence="4">
    <location>
        <begin position="105"/>
        <end position="131"/>
    </location>
</feature>
<feature type="region of interest" description="Binds microtubules and protein phosphatase PP1 subunit PPP1CA" evidence="1">
    <location>
        <begin position="131"/>
        <end position="254"/>
    </location>
</feature>
<feature type="coiled-coil region" evidence="3">
    <location>
        <begin position="49"/>
        <end position="90"/>
    </location>
</feature>
<feature type="short sequence motif" description="Slightly degenerated SXLP motif; may mediate interaction with MAPRE1, targeting to microtubule plus ends, stabilization on kinetochores and is required for proper chromosome alignment to the metaphase plate" evidence="1">
    <location>
        <begin position="92"/>
        <end position="95"/>
    </location>
</feature>
<feature type="compositionally biased region" description="Basic and acidic residues" evidence="4">
    <location>
        <begin position="113"/>
        <end position="131"/>
    </location>
</feature>
<feature type="modified residue" description="Phosphothreonine" evidence="1">
    <location>
        <position position="156"/>
    </location>
</feature>
<feature type="modified residue" description="Phosphoserine" evidence="1">
    <location>
        <position position="241"/>
    </location>
</feature>
<feature type="splice variant" id="VSP_037277" description="In isoform 2." evidence="5">
    <original>HYFVVEADIKEFTTLKVDKRFHGILNILRHCRRLSEVRGKGLTRYVIT</original>
    <variation>KMRVYVCVCMSNESICVCVHVK</variation>
    <location>
        <begin position="207"/>
        <end position="254"/>
    </location>
</feature>
<feature type="sequence conflict" description="In Ref. 1; ABH06330/EH156388." evidence="6" ref="1">
    <original>S</original>
    <variation>A</variation>
    <location>
        <position position="10"/>
    </location>
</feature>
<protein>
    <recommendedName>
        <fullName evidence="6">SKA complex subunit 1</fullName>
    </recommendedName>
    <alternativeName>
        <fullName evidence="6">Spindle and kinetochore-associated protein 1</fullName>
    </alternativeName>
</protein>
<evidence type="ECO:0000250" key="1">
    <source>
        <dbReference type="UniProtKB" id="Q96BD8"/>
    </source>
</evidence>
<evidence type="ECO:0000250" key="2">
    <source>
        <dbReference type="UniProtKB" id="Q9CPV1"/>
    </source>
</evidence>
<evidence type="ECO:0000255" key="3"/>
<evidence type="ECO:0000256" key="4">
    <source>
        <dbReference type="SAM" id="MobiDB-lite"/>
    </source>
</evidence>
<evidence type="ECO:0000303" key="5">
    <source>
    </source>
</evidence>
<evidence type="ECO:0000305" key="6"/>
<evidence type="ECO:0000312" key="7">
    <source>
        <dbReference type="Proteomes" id="UP000009136"/>
    </source>
</evidence>
<gene>
    <name type="primary">SKA1</name>
</gene>
<dbReference type="EMBL" id="BT026543">
    <property type="protein sequence ID" value="ABH06330.1"/>
    <property type="status" value="ALT_FRAME"/>
    <property type="molecule type" value="mRNA"/>
</dbReference>
<dbReference type="EMBL" id="EH156388">
    <property type="status" value="NOT_ANNOTATED_CDS"/>
    <property type="molecule type" value="mRNA"/>
</dbReference>
<dbReference type="RefSeq" id="NP_001068795.2">
    <molecule id="Q0V7M7-1"/>
    <property type="nucleotide sequence ID" value="NM_001075327.2"/>
</dbReference>
<dbReference type="RefSeq" id="XP_005224192.1">
    <molecule id="Q0V7M7-1"/>
    <property type="nucleotide sequence ID" value="XM_005224135.5"/>
</dbReference>
<dbReference type="RefSeq" id="XP_005224193.1">
    <molecule id="Q0V7M7-1"/>
    <property type="nucleotide sequence ID" value="XM_005224136.5"/>
</dbReference>
<dbReference type="RefSeq" id="XP_024839971.1">
    <molecule id="Q0V7M7-1"/>
    <property type="nucleotide sequence ID" value="XM_024984203.2"/>
</dbReference>
<dbReference type="RefSeq" id="XP_059736763.1">
    <molecule id="Q0V7M7-1"/>
    <property type="nucleotide sequence ID" value="XM_059880780.1"/>
</dbReference>
<dbReference type="SMR" id="Q0V7M7"/>
<dbReference type="FunCoup" id="Q0V7M7">
    <property type="interactions" value="849"/>
</dbReference>
<dbReference type="STRING" id="9913.ENSBTAP00000070061"/>
<dbReference type="PaxDb" id="9913-ENSBTAP00000024245"/>
<dbReference type="GeneID" id="507703"/>
<dbReference type="KEGG" id="bta:507703"/>
<dbReference type="CTD" id="220134"/>
<dbReference type="VEuPathDB" id="HostDB:ENSBTAG00000018216"/>
<dbReference type="eggNOG" id="KOG4832">
    <property type="taxonomic scope" value="Eukaryota"/>
</dbReference>
<dbReference type="HOGENOM" id="CLU_096842_0_0_1"/>
<dbReference type="InParanoid" id="Q0V7M7"/>
<dbReference type="OrthoDB" id="5962at2759"/>
<dbReference type="TreeFam" id="TF324442"/>
<dbReference type="Proteomes" id="UP000009136">
    <property type="component" value="Chromosome 24"/>
</dbReference>
<dbReference type="Bgee" id="ENSBTAG00000018216">
    <property type="expression patterns" value="Expressed in oocyte and 97 other cell types or tissues"/>
</dbReference>
<dbReference type="GO" id="GO:0034451">
    <property type="term" value="C:centriolar satellite"/>
    <property type="evidence" value="ECO:0007669"/>
    <property type="project" value="Ensembl"/>
</dbReference>
<dbReference type="GO" id="GO:0005813">
    <property type="term" value="C:centrosome"/>
    <property type="evidence" value="ECO:0000250"/>
    <property type="project" value="UniProtKB"/>
</dbReference>
<dbReference type="GO" id="GO:0036064">
    <property type="term" value="C:ciliary basal body"/>
    <property type="evidence" value="ECO:0007669"/>
    <property type="project" value="Ensembl"/>
</dbReference>
<dbReference type="GO" id="GO:0005737">
    <property type="term" value="C:cytoplasm"/>
    <property type="evidence" value="ECO:0007669"/>
    <property type="project" value="UniProtKB-KW"/>
</dbReference>
<dbReference type="GO" id="GO:0045171">
    <property type="term" value="C:intercellular bridge"/>
    <property type="evidence" value="ECO:0007669"/>
    <property type="project" value="Ensembl"/>
</dbReference>
<dbReference type="GO" id="GO:0072687">
    <property type="term" value="C:meiotic spindle"/>
    <property type="evidence" value="ECO:0000250"/>
    <property type="project" value="UniProtKB"/>
</dbReference>
<dbReference type="GO" id="GO:0072686">
    <property type="term" value="C:mitotic spindle"/>
    <property type="evidence" value="ECO:0000250"/>
    <property type="project" value="UniProtKB"/>
</dbReference>
<dbReference type="GO" id="GO:1990498">
    <property type="term" value="C:mitotic spindle microtubule"/>
    <property type="evidence" value="ECO:0007669"/>
    <property type="project" value="Ensembl"/>
</dbReference>
<dbReference type="GO" id="GO:0005654">
    <property type="term" value="C:nucleoplasm"/>
    <property type="evidence" value="ECO:0007669"/>
    <property type="project" value="Ensembl"/>
</dbReference>
<dbReference type="GO" id="GO:0000940">
    <property type="term" value="C:outer kinetochore"/>
    <property type="evidence" value="ECO:0000250"/>
    <property type="project" value="UniProtKB"/>
</dbReference>
<dbReference type="GO" id="GO:0170027">
    <property type="term" value="C:SKA complex"/>
    <property type="evidence" value="ECO:0007669"/>
    <property type="project" value="Ensembl"/>
</dbReference>
<dbReference type="GO" id="GO:0005876">
    <property type="term" value="C:spindle microtubule"/>
    <property type="evidence" value="ECO:0000318"/>
    <property type="project" value="GO_Central"/>
</dbReference>
<dbReference type="GO" id="GO:0008017">
    <property type="term" value="F:microtubule binding"/>
    <property type="evidence" value="ECO:0000250"/>
    <property type="project" value="UniProtKB"/>
</dbReference>
<dbReference type="GO" id="GO:0051315">
    <property type="term" value="P:attachment of mitotic spindle microtubules to kinetochore"/>
    <property type="evidence" value="ECO:0000250"/>
    <property type="project" value="UniProtKB"/>
</dbReference>
<dbReference type="GO" id="GO:0051301">
    <property type="term" value="P:cell division"/>
    <property type="evidence" value="ECO:0007669"/>
    <property type="project" value="UniProtKB-KW"/>
</dbReference>
<dbReference type="GO" id="GO:0007059">
    <property type="term" value="P:chromosome segregation"/>
    <property type="evidence" value="ECO:0000318"/>
    <property type="project" value="GO_Central"/>
</dbReference>
<dbReference type="GO" id="GO:0051296">
    <property type="term" value="P:establishment of meiotic spindle orientation"/>
    <property type="evidence" value="ECO:0000250"/>
    <property type="project" value="UniProtKB"/>
</dbReference>
<dbReference type="GO" id="GO:0000278">
    <property type="term" value="P:mitotic cell cycle"/>
    <property type="evidence" value="ECO:0000250"/>
    <property type="project" value="UniProtKB"/>
</dbReference>
<dbReference type="GO" id="GO:0007080">
    <property type="term" value="P:mitotic metaphase chromosome alignment"/>
    <property type="evidence" value="ECO:0000250"/>
    <property type="project" value="UniProtKB"/>
</dbReference>
<dbReference type="GO" id="GO:0000070">
    <property type="term" value="P:mitotic sister chromatid segregation"/>
    <property type="evidence" value="ECO:0000250"/>
    <property type="project" value="UniProtKB"/>
</dbReference>
<dbReference type="GO" id="GO:0140499">
    <property type="term" value="P:negative regulation of mitotic spindle assembly checkpoint signaling"/>
    <property type="evidence" value="ECO:0000250"/>
    <property type="project" value="UniProtKB"/>
</dbReference>
<dbReference type="GO" id="GO:0031116">
    <property type="term" value="P:positive regulation of microtubule polymerization"/>
    <property type="evidence" value="ECO:0007669"/>
    <property type="project" value="Ensembl"/>
</dbReference>
<dbReference type="GO" id="GO:0031110">
    <property type="term" value="P:regulation of microtubule polymerization or depolymerization"/>
    <property type="evidence" value="ECO:0000250"/>
    <property type="project" value="UniProtKB"/>
</dbReference>
<dbReference type="GO" id="GO:0007056">
    <property type="term" value="P:spindle assembly involved in female meiosis"/>
    <property type="evidence" value="ECO:0000250"/>
    <property type="project" value="UniProtKB"/>
</dbReference>
<dbReference type="CDD" id="cd12958">
    <property type="entry name" value="SKA1_N"/>
    <property type="match status" value="1"/>
</dbReference>
<dbReference type="FunFam" id="1.10.10.1890:FF:000001">
    <property type="entry name" value="Spindle and kinetochore-associated protein 1"/>
    <property type="match status" value="1"/>
</dbReference>
<dbReference type="Gene3D" id="6.10.250.1370">
    <property type="match status" value="1"/>
</dbReference>
<dbReference type="Gene3D" id="1.10.10.1890">
    <property type="entry name" value="Ska1 microtubule binding domain-like"/>
    <property type="match status" value="1"/>
</dbReference>
<dbReference type="InterPro" id="IPR009829">
    <property type="entry name" value="SKA1"/>
</dbReference>
<dbReference type="InterPro" id="IPR042031">
    <property type="entry name" value="SKA1_MBD_sf"/>
</dbReference>
<dbReference type="PANTHER" id="PTHR28573">
    <property type="entry name" value="SPINDLE AND KINETOCHORE-ASSOCIATED PROTEIN 1"/>
    <property type="match status" value="1"/>
</dbReference>
<dbReference type="PANTHER" id="PTHR28573:SF1">
    <property type="entry name" value="SPINDLE AND KINETOCHORE-ASSOCIATED PROTEIN 1"/>
    <property type="match status" value="1"/>
</dbReference>
<dbReference type="Pfam" id="PF07160">
    <property type="entry name" value="SKA1"/>
    <property type="match status" value="1"/>
</dbReference>
<organism>
    <name type="scientific">Bos taurus</name>
    <name type="common">Bovine</name>
    <dbReference type="NCBI Taxonomy" id="9913"/>
    <lineage>
        <taxon>Eukaryota</taxon>
        <taxon>Metazoa</taxon>
        <taxon>Chordata</taxon>
        <taxon>Craniata</taxon>
        <taxon>Vertebrata</taxon>
        <taxon>Euteleostomi</taxon>
        <taxon>Mammalia</taxon>
        <taxon>Eutheria</taxon>
        <taxon>Laurasiatheria</taxon>
        <taxon>Artiodactyla</taxon>
        <taxon>Ruminantia</taxon>
        <taxon>Pecora</taxon>
        <taxon>Bovidae</taxon>
        <taxon>Bovinae</taxon>
        <taxon>Bos</taxon>
    </lineage>
</organism>
<comment type="function">
    <text evidence="1 2">Component of the SKA complex, a microtubule plus end-binding complex of the outer kinetochore that stabilizes spindle microtubule-kinetochore attachments, promotes alignment of chromosomes at the mitotic spindle equator (chromosome congression) and assists suppression of the spindle assembly checkpoint. Kinetochores, consisting of a centromere-associated inner segment and a microtubule-contacting outer segment, play a crucial role in chromosome segregation by mediating the physical connection between centromeric DNA and spindle microtubules. The outer kinetochore is made up of the ten-subunit KMN network complex, comprising the MIS12, NDC80 and KNL1 complexes, and auxiliary microtubule-associated components such as the SKA complex; together they connect the outer kinetochore with the inner kinetochore, bind microtubules, and mediate interactions with mitotic checkpoint proteins that delay anaphase until chromosomes are bioriented on the spindle. The SKA complex is loaded onto bioriented kinetochores and it facilitates chromosome congression by stabilizing microtubules together with MAPRE1, and end-on attachment of the NDC80 complex to depolymerizing spindle microtubules, thereby assisting the poleward-moving kinetochore in withstanding microtubule pulling forces. The complex associates with dynamic microtubule plus-ends and can track both depolymerizing and elongating microtubules. The complex recruits protein phosphatase 1 (PP1) to the kinetochore in prometaphase and metaphase, to oppose spindle assembly checkpoint signaling and promote the onset of anaphase. In the complex, it mediates interactions with microtubules. It also stimulates AURKB/Aurora B catalytic activity (By similarity). During meiosis the SKA complex stabilizes the meiotic spindle and is required for its migration to the cortex (By similarity).</text>
</comment>
<comment type="subunit">
    <text evidence="1">Component of the SKA complex, composed of SKA1, SKA2 and SKA3. The SKA complex is a homodimer organized around a central W-shaped coiled-coil structure, formed by the interacting domains of SKA1, SKA2, and SKA3, each end of the 'W' is extended further by the C-terminal microtubule-binding domains of SKA1 and SKA3; the complex forms extended structures on microtubules. Interacts (via SXLP motif) with MAPRE1 (via C-terminus); the interaction is direct and stabilizes the kinetochore-microtubule attachment of the SKA1 complex. Interacts (via C-terminus) with protein phosphatase PP1 subunit PPP1CA; the interaction is direct and required for recruitment of PPP1CA to the kinetochore. Interacts with the NDC80 complex; the interaction is required to establish kinetochore-microtubule end-on attachments.</text>
</comment>
<comment type="subcellular location">
    <subcellularLocation>
        <location evidence="1">Cytoplasm</location>
        <location evidence="1">Cytoskeleton</location>
        <location evidence="1">Spindle</location>
    </subcellularLocation>
    <subcellularLocation>
        <location evidence="1">Chromosome</location>
        <location evidence="1">Centromere</location>
        <location evidence="1">Kinetochore</location>
    </subcellularLocation>
    <subcellularLocation>
        <location evidence="1">Cytoplasm</location>
        <location evidence="1">Cytoskeleton</location>
        <location evidence="1">Microtubule organizing center</location>
        <location evidence="1">Centrosome</location>
    </subcellularLocation>
    <text evidence="1 2">Localizes to bioriented kinetochores and spindle microtubules during metaphase in a NDC80 complex-dependent manner (By similarity). The SKA complex begins to concentrate at kinetochores before microtubule attachment but reaches maximum levels on bioriented metaphase chromosomes (By similarity). Localizes both to microtubule plus-ends and along the length of microtubules (By similarity). The localization of the SKA complex to kinetochores is positively regulated by kinase CDK1 (By similarity). The localization of the SKA complex to kinetochores is negatively regulated by protein serine/threonine kinase AURKB, and this action is opposed directly or indirectly by the PP1 and PP2A protein phosphatase complexes (By similarity). Localizes at the centrosome during interphase and prophase (By similarity). Localizes to the meiotic spindle, but not to kinetochores, from the stage of germinal vesicle breakdown (GVBD) to meiosis II (MII) (By similarity).</text>
</comment>
<comment type="alternative products">
    <event type="alternative splicing"/>
    <isoform>
        <id>Q0V7M7-1</id>
        <name>1</name>
        <sequence type="displayed"/>
    </isoform>
    <isoform>
        <id>Q0V7M7-2</id>
        <name>2</name>
        <sequence type="described" ref="VSP_037277"/>
    </isoform>
</comment>
<comment type="similarity">
    <text evidence="6">Belongs to the SKA1 family.</text>
</comment>
<comment type="sequence caution" evidence="6">
    <conflict type="frameshift">
        <sequence resource="EMBL-CDS" id="ABH06330"/>
    </conflict>
</comment>
<keyword id="KW-0025">Alternative splicing</keyword>
<keyword id="KW-0131">Cell cycle</keyword>
<keyword id="KW-0132">Cell division</keyword>
<keyword id="KW-0137">Centromere</keyword>
<keyword id="KW-0158">Chromosome</keyword>
<keyword id="KW-0175">Coiled coil</keyword>
<keyword id="KW-0963">Cytoplasm</keyword>
<keyword id="KW-0206">Cytoskeleton</keyword>
<keyword id="KW-0995">Kinetochore</keyword>
<keyword id="KW-0493">Microtubule</keyword>
<keyword id="KW-0498">Mitosis</keyword>
<keyword id="KW-0597">Phosphoprotein</keyword>
<keyword id="KW-1185">Reference proteome</keyword>